<gene>
    <name type="primary">VDAC3</name>
    <name type="synonym">HSR2</name>
    <name type="ordered locus">At5g15090</name>
    <name type="ORF">F2G14.210</name>
</gene>
<reference evidence="10" key="1">
    <citation type="journal article" date="1999" name="FEBS Lett.">
        <title>Identification of new early markers of the hypersensitive response in Arabidopsis thaliana.</title>
        <authorList>
            <person name="Lacomme C.J."/>
            <person name="Roby D."/>
        </authorList>
    </citation>
    <scope>NUCLEOTIDE SEQUENCE [MRNA]</scope>
    <scope>INDUCTION</scope>
    <source>
        <strain>cv. Columbia</strain>
    </source>
</reference>
<reference evidence="10" key="2">
    <citation type="journal article" date="2000" name="Nature">
        <title>Sequence and analysis of chromosome 5 of the plant Arabidopsis thaliana.</title>
        <authorList>
            <person name="Tabata S."/>
            <person name="Kaneko T."/>
            <person name="Nakamura Y."/>
            <person name="Kotani H."/>
            <person name="Kato T."/>
            <person name="Asamizu E."/>
            <person name="Miyajima N."/>
            <person name="Sasamoto S."/>
            <person name="Kimura T."/>
            <person name="Hosouchi T."/>
            <person name="Kawashima K."/>
            <person name="Kohara M."/>
            <person name="Matsumoto M."/>
            <person name="Matsuno A."/>
            <person name="Muraki A."/>
            <person name="Nakayama S."/>
            <person name="Nakazaki N."/>
            <person name="Naruo K."/>
            <person name="Okumura S."/>
            <person name="Shinpo S."/>
            <person name="Takeuchi C."/>
            <person name="Wada T."/>
            <person name="Watanabe A."/>
            <person name="Yamada M."/>
            <person name="Yasuda M."/>
            <person name="Sato S."/>
            <person name="de la Bastide M."/>
            <person name="Huang E."/>
            <person name="Spiegel L."/>
            <person name="Gnoj L."/>
            <person name="O'Shaughnessy A."/>
            <person name="Preston R."/>
            <person name="Habermann K."/>
            <person name="Murray J."/>
            <person name="Johnson D."/>
            <person name="Rohlfing T."/>
            <person name="Nelson J."/>
            <person name="Stoneking T."/>
            <person name="Pepin K."/>
            <person name="Spieth J."/>
            <person name="Sekhon M."/>
            <person name="Armstrong J."/>
            <person name="Becker M."/>
            <person name="Belter E."/>
            <person name="Cordum H."/>
            <person name="Cordes M."/>
            <person name="Courtney L."/>
            <person name="Courtney W."/>
            <person name="Dante M."/>
            <person name="Du H."/>
            <person name="Edwards J."/>
            <person name="Fryman J."/>
            <person name="Haakensen B."/>
            <person name="Lamar E."/>
            <person name="Latreille P."/>
            <person name="Leonard S."/>
            <person name="Meyer R."/>
            <person name="Mulvaney E."/>
            <person name="Ozersky P."/>
            <person name="Riley A."/>
            <person name="Strowmatt C."/>
            <person name="Wagner-McPherson C."/>
            <person name="Wollam A."/>
            <person name="Yoakum M."/>
            <person name="Bell M."/>
            <person name="Dedhia N."/>
            <person name="Parnell L."/>
            <person name="Shah R."/>
            <person name="Rodriguez M."/>
            <person name="Hoon See L."/>
            <person name="Vil D."/>
            <person name="Baker J."/>
            <person name="Kirchoff K."/>
            <person name="Toth K."/>
            <person name="King L."/>
            <person name="Bahret A."/>
            <person name="Miller B."/>
            <person name="Marra M.A."/>
            <person name="Martienssen R."/>
            <person name="McCombie W.R."/>
            <person name="Wilson R.K."/>
            <person name="Murphy G."/>
            <person name="Bancroft I."/>
            <person name="Volckaert G."/>
            <person name="Wambutt R."/>
            <person name="Duesterhoeft A."/>
            <person name="Stiekema W."/>
            <person name="Pohl T."/>
            <person name="Entian K.-D."/>
            <person name="Terryn N."/>
            <person name="Hartley N."/>
            <person name="Bent E."/>
            <person name="Johnson S."/>
            <person name="Langham S.-A."/>
            <person name="McCullagh B."/>
            <person name="Robben J."/>
            <person name="Grymonprez B."/>
            <person name="Zimmermann W."/>
            <person name="Ramsperger U."/>
            <person name="Wedler H."/>
            <person name="Balke K."/>
            <person name="Wedler E."/>
            <person name="Peters S."/>
            <person name="van Staveren M."/>
            <person name="Dirkse W."/>
            <person name="Mooijman P."/>
            <person name="Klein Lankhorst R."/>
            <person name="Weitzenegger T."/>
            <person name="Bothe G."/>
            <person name="Rose M."/>
            <person name="Hauf J."/>
            <person name="Berneiser S."/>
            <person name="Hempel S."/>
            <person name="Feldpausch M."/>
            <person name="Lamberth S."/>
            <person name="Villarroel R."/>
            <person name="Gielen J."/>
            <person name="Ardiles W."/>
            <person name="Bents O."/>
            <person name="Lemcke K."/>
            <person name="Kolesov G."/>
            <person name="Mayer K.F.X."/>
            <person name="Rudd S."/>
            <person name="Schoof H."/>
            <person name="Schueller C."/>
            <person name="Zaccaria P."/>
            <person name="Mewes H.-W."/>
            <person name="Bevan M."/>
            <person name="Fransz P.F."/>
        </authorList>
    </citation>
    <scope>NUCLEOTIDE SEQUENCE [LARGE SCALE GENOMIC DNA]</scope>
    <source>
        <strain>cv. Columbia</strain>
    </source>
</reference>
<reference evidence="10" key="3">
    <citation type="journal article" date="2017" name="Plant J.">
        <title>Araport11: a complete reannotation of the Arabidopsis thaliana reference genome.</title>
        <authorList>
            <person name="Cheng C.Y."/>
            <person name="Krishnakumar V."/>
            <person name="Chan A.P."/>
            <person name="Thibaud-Nissen F."/>
            <person name="Schobel S."/>
            <person name="Town C.D."/>
        </authorList>
    </citation>
    <scope>GENOME REANNOTATION</scope>
    <source>
        <strain>cv. Columbia</strain>
    </source>
</reference>
<reference key="4">
    <citation type="journal article" date="2003" name="Science">
        <title>Empirical analysis of transcriptional activity in the Arabidopsis genome.</title>
        <authorList>
            <person name="Yamada K."/>
            <person name="Lim J."/>
            <person name="Dale J.M."/>
            <person name="Chen H."/>
            <person name="Shinn P."/>
            <person name="Palm C.J."/>
            <person name="Southwick A.M."/>
            <person name="Wu H.C."/>
            <person name="Kim C.J."/>
            <person name="Nguyen M."/>
            <person name="Pham P.K."/>
            <person name="Cheuk R.F."/>
            <person name="Karlin-Newmann G."/>
            <person name="Liu S.X."/>
            <person name="Lam B."/>
            <person name="Sakano H."/>
            <person name="Wu T."/>
            <person name="Yu G."/>
            <person name="Miranda M."/>
            <person name="Quach H.L."/>
            <person name="Tripp M."/>
            <person name="Chang C.H."/>
            <person name="Lee J.M."/>
            <person name="Toriumi M.J."/>
            <person name="Chan M.M."/>
            <person name="Tang C.C."/>
            <person name="Onodera C.S."/>
            <person name="Deng J.M."/>
            <person name="Akiyama K."/>
            <person name="Ansari Y."/>
            <person name="Arakawa T."/>
            <person name="Banh J."/>
            <person name="Banno F."/>
            <person name="Bowser L."/>
            <person name="Brooks S.Y."/>
            <person name="Carninci P."/>
            <person name="Chao Q."/>
            <person name="Choy N."/>
            <person name="Enju A."/>
            <person name="Goldsmith A.D."/>
            <person name="Gurjal M."/>
            <person name="Hansen N.F."/>
            <person name="Hayashizaki Y."/>
            <person name="Johnson-Hopson C."/>
            <person name="Hsuan V.W."/>
            <person name="Iida K."/>
            <person name="Karnes M."/>
            <person name="Khan S."/>
            <person name="Koesema E."/>
            <person name="Ishida J."/>
            <person name="Jiang P.X."/>
            <person name="Jones T."/>
            <person name="Kawai J."/>
            <person name="Kamiya A."/>
            <person name="Meyers C."/>
            <person name="Nakajima M."/>
            <person name="Narusaka M."/>
            <person name="Seki M."/>
            <person name="Sakurai T."/>
            <person name="Satou M."/>
            <person name="Tamse R."/>
            <person name="Vaysberg M."/>
            <person name="Wallender E.K."/>
            <person name="Wong C."/>
            <person name="Yamamura Y."/>
            <person name="Yuan S."/>
            <person name="Shinozaki K."/>
            <person name="Davis R.W."/>
            <person name="Theologis A."/>
            <person name="Ecker J.R."/>
        </authorList>
    </citation>
    <scope>NUCLEOTIDE SEQUENCE [LARGE SCALE MRNA]</scope>
    <source>
        <strain>cv. Columbia</strain>
    </source>
</reference>
<reference evidence="10" key="5">
    <citation type="submission" date="2002-03" db="EMBL/GenBank/DDBJ databases">
        <title>Full-length cDNA from Arabidopsis thaliana.</title>
        <authorList>
            <person name="Brover V.V."/>
            <person name="Troukhan M.E."/>
            <person name="Alexandrov N.A."/>
            <person name="Lu Y.-P."/>
            <person name="Flavell R.B."/>
            <person name="Feldmann K.A."/>
        </authorList>
    </citation>
    <scope>NUCLEOTIDE SEQUENCE [LARGE SCALE MRNA]</scope>
</reference>
<reference evidence="10" key="6">
    <citation type="journal article" date="2001" name="Plant Physiol.">
        <title>Proteomic approach to identify novel mitochondrial proteins in Arabidopsis.</title>
        <authorList>
            <person name="Kruft V."/>
            <person name="Eubel H."/>
            <person name="Jaensch L."/>
            <person name="Werhahn W."/>
            <person name="Braun H.-P."/>
        </authorList>
    </citation>
    <scope>PROTEIN SEQUENCE OF 2-16</scope>
    <scope>SUBCELLULAR LOCATION</scope>
    <source>
        <tissue>Leaf</tissue>
        <tissue>Stem</tissue>
    </source>
</reference>
<reference key="7">
    <citation type="journal article" date="2004" name="Mol. Cell. Proteomics">
        <title>Identification of new intrinsic proteins in Arabidopsis plasma membrane proteome.</title>
        <authorList>
            <person name="Marmagne A."/>
            <person name="Rouet M.-A."/>
            <person name="Ferro M."/>
            <person name="Rolland N."/>
            <person name="Alcon C."/>
            <person name="Joyard J."/>
            <person name="Garin J."/>
            <person name="Barbier-Brygoo H."/>
            <person name="Ephritikhine G."/>
        </authorList>
    </citation>
    <scope>IDENTIFICATION BY MASS SPECTROMETRY</scope>
    <scope>SUBCELLULAR LOCATION</scope>
</reference>
<reference key="8">
    <citation type="journal article" date="2004" name="Plant Cell">
        <title>Experimental analysis of the Arabidopsis mitochondrial proteome highlights signaling and regulatory components, provides assessment of targeting prediction programs, and indicates plant-specific mitochondrial proteins.</title>
        <authorList>
            <person name="Heazlewood J.L."/>
            <person name="Tonti-Filippini J.S."/>
            <person name="Gout A.M."/>
            <person name="Day D.A."/>
            <person name="Whelan J."/>
            <person name="Millar A.H."/>
        </authorList>
    </citation>
    <scope>IDENTIFICATION BY MASS SPECTROMETRY</scope>
    <scope>SUBCELLULAR LOCATION [LARGE SCALE ANALYSIS]</scope>
    <source>
        <strain>cv. Landsberg erecta</strain>
    </source>
</reference>
<reference key="9">
    <citation type="journal article" date="2009" name="Mol. Cells">
        <title>Pathogen inducible voltage-dependent anion channel (AtVDAC) isoforms are localized to mitochondria membrane in Arabidopsis.</title>
        <authorList>
            <person name="Lee S.M."/>
            <person name="Hoang M.H."/>
            <person name="Han H.J."/>
            <person name="Kim H.S."/>
            <person name="Lee K."/>
            <person name="Kim K.E."/>
            <person name="Kim D.H."/>
            <person name="Lee S.Y."/>
            <person name="Chung W.S."/>
        </authorList>
    </citation>
    <scope>SUBCELLULAR LOCATION</scope>
    <scope>INDUCTION</scope>
</reference>
<reference key="10">
    <citation type="journal article" date="2011" name="J. Exp. Bot.">
        <title>Molecular and genetic characterization of the gene family encoding the voltage-dependent anion channel in Arabidopsis.</title>
        <authorList>
            <person name="Tateda C."/>
            <person name="Watanabe K."/>
            <person name="Kusano T."/>
            <person name="Takahashi Y."/>
        </authorList>
    </citation>
    <scope>SUBCELLULAR LOCATION</scope>
    <scope>TISSUE SPECIFICITY</scope>
    <scope>GENE FAMILY</scope>
    <scope>DISRUPTION PHENOTYPE</scope>
</reference>
<reference key="11">
    <citation type="journal article" date="2011" name="Plant Cell">
        <title>Arabidopsis kinesin KP1 specifically interacts with VDAC3, a mitochondrial protein, and regulates respiration during seed germination at low temperature.</title>
        <authorList>
            <person name="Yang X.Y."/>
            <person name="Chen Z.W."/>
            <person name="Xu T."/>
            <person name="Qu Z."/>
            <person name="Pan X.D."/>
            <person name="Qin X.H."/>
            <person name="Ren D.T."/>
            <person name="Liu G.Q."/>
        </authorList>
    </citation>
    <scope>INTERACTION WITH KIN14F/KP1</scope>
</reference>
<reference key="12">
    <citation type="journal article" date="2012" name="Front. Plant Sci.">
        <title>Transfer of a redox-signal through the cytosol by redox-dependent microcompartmentation of glycolytic enzymes at mitochondria and actin cytoskeleton.</title>
        <authorList>
            <person name="Wojtera-Kwiczor J."/>
            <person name="Gross F."/>
            <person name="Leffers H.M."/>
            <person name="Kang M."/>
            <person name="Schneider M."/>
            <person name="Scheibe R."/>
        </authorList>
    </citation>
    <scope>INTERACTION WITH FBA6 AND GAPC1</scope>
</reference>
<reference key="13">
    <citation type="journal article" date="2012" name="J. Proteome Res.">
        <title>Identification of phosphoproteins in Arabidopsis thaliana leaves using polyethylene glycol fractionation, immobilized metal-ion affinity chromatography, two-dimensional gel electrophoresis and mass spectrometry.</title>
        <authorList>
            <person name="Aryal U.K."/>
            <person name="Krochko J.E."/>
            <person name="Ross A.R."/>
        </authorList>
    </citation>
    <scope>PHOSPHORYLATION [LARGE SCALE ANALYSIS] AT SER-76</scope>
    <scope>IDENTIFICATION BY MASS SPECTROMETRY [LARGE SCALE ANALYSIS]</scope>
</reference>
<comment type="function">
    <text evidence="1">Forms a channel through the mitochondrial outer membrane that allows diffusion of small hydrophilic molecules. The channel adopts an open conformation at low or zero membrane potential and a closed conformation at potentials above 30-40 mV. The open state has a weak anion selectivity whereas the closed state is cation-selective (By similarity).</text>
</comment>
<comment type="subunit">
    <text evidence="7 9">Interacts with KIN14F/KP1 (PubMed:21406623). Interacts with FBA6 and GAPC1 (PubMed:23316205).</text>
</comment>
<comment type="interaction">
    <interactant intactId="EBI-4457873">
        <id>Q9SMX3</id>
    </interactant>
    <interactant intactId="EBI-4475330">
        <id>Q9SEU8</id>
        <label>TRXM2</label>
    </interactant>
    <organismsDiffer>false</organismsDiffer>
    <experiments>4</experiments>
</comment>
<comment type="subcellular location">
    <subcellularLocation>
        <location evidence="5">Cell membrane</location>
    </subcellularLocation>
    <subcellularLocation>
        <location evidence="3 4 6 8">Mitochondrion outer membrane</location>
    </subcellularLocation>
</comment>
<comment type="tissue specificity">
    <text evidence="8">Expressed in leaf tips, anthers and stigma.</text>
</comment>
<comment type="induction">
    <text evidence="2 6">Induced during the hypersensitive response to X.campestris pv campestris and by the bacterial pathogen P.syringae pv. tomato.</text>
</comment>
<comment type="domain">
    <text>Consists mainly of membrane-spanning sided beta-sheets.</text>
</comment>
<comment type="disruption phenotype">
    <text evidence="8">No visible phenotype under normal growth conditions.</text>
</comment>
<comment type="similarity">
    <text evidence="10">Belongs to the eukaryotic mitochondrial porin (TC 1.B.8.1) family.</text>
</comment>
<protein>
    <recommendedName>
        <fullName>Mitochondrial outer membrane protein porin 3</fullName>
    </recommendedName>
    <alternativeName>
        <fullName>Protein HYPERSENSITIVE RESPONSE 2</fullName>
        <shortName>Athsr2</shortName>
    </alternativeName>
    <alternativeName>
        <fullName>Voltage-dependent anion-selective channel protein 3</fullName>
        <shortName>AtVDAC3</shortName>
        <shortName>VDAC-3</shortName>
    </alternativeName>
</protein>
<evidence type="ECO:0000250" key="1"/>
<evidence type="ECO:0000269" key="2">
    <source>
    </source>
</evidence>
<evidence type="ECO:0000269" key="3">
    <source>
    </source>
</evidence>
<evidence type="ECO:0000269" key="4">
    <source>
    </source>
</evidence>
<evidence type="ECO:0000269" key="5">
    <source>
    </source>
</evidence>
<evidence type="ECO:0000269" key="6">
    <source>
    </source>
</evidence>
<evidence type="ECO:0000269" key="7">
    <source>
    </source>
</evidence>
<evidence type="ECO:0000269" key="8">
    <source>
    </source>
</evidence>
<evidence type="ECO:0000269" key="9">
    <source>
    </source>
</evidence>
<evidence type="ECO:0000305" key="10"/>
<evidence type="ECO:0000312" key="11">
    <source>
        <dbReference type="EMBL" id="CAC01828.1"/>
    </source>
</evidence>
<evidence type="ECO:0007744" key="12">
    <source>
    </source>
</evidence>
<feature type="initiator methionine" description="Removed" evidence="3">
    <location>
        <position position="1"/>
    </location>
</feature>
<feature type="chain" id="PRO_0000050527" description="Mitochondrial outer membrane protein porin 3">
    <location>
        <begin position="2"/>
        <end position="274"/>
    </location>
</feature>
<feature type="modified residue" description="Phosphoserine" evidence="12">
    <location>
        <position position="76"/>
    </location>
</feature>
<feature type="sequence conflict" description="In Ref. 5; AAM62480." evidence="10" ref="5">
    <original>N</original>
    <variation>K</variation>
    <location>
        <position position="63"/>
    </location>
</feature>
<sequence>MVKGPGLYTEIGKKARDLLYRDYQGDQKFSVTTYSSTGVAITTTGTNKGSLFLGDVATQVKNNNFTADVKVSTDSSLLTTLTFDEPAPGLKVIVQAKLPDHKSGKAEVQYFHDYAGISTSVGFTATPIVNFSGVVGTNGLSLGTDVAYNTESGNFKHFNAGFNFTKDDLTASLILNDKGEKLNASYYQIVSPSTVVGAEISHNFTTKENAITVGTQHALDPLTTVKARVNNAGVANALIQHEWRPKSFFTVSGEVDSKAIDKSAKVGIALALKP</sequence>
<keyword id="KW-1003">Cell membrane</keyword>
<keyword id="KW-0903">Direct protein sequencing</keyword>
<keyword id="KW-0381">Hypersensitive response</keyword>
<keyword id="KW-0406">Ion transport</keyword>
<keyword id="KW-0472">Membrane</keyword>
<keyword id="KW-0496">Mitochondrion</keyword>
<keyword id="KW-1000">Mitochondrion outer membrane</keyword>
<keyword id="KW-0597">Phosphoprotein</keyword>
<keyword id="KW-0611">Plant defense</keyword>
<keyword id="KW-0626">Porin</keyword>
<keyword id="KW-1185">Reference proteome</keyword>
<keyword id="KW-0812">Transmembrane</keyword>
<keyword id="KW-1134">Transmembrane beta strand</keyword>
<keyword id="KW-0813">Transport</keyword>
<dbReference type="EMBL" id="AJ131391">
    <property type="protein sequence ID" value="CAA10363.1"/>
    <property type="molecule type" value="mRNA"/>
</dbReference>
<dbReference type="EMBL" id="AL391146">
    <property type="protein sequence ID" value="CAC01828.1"/>
    <property type="molecule type" value="Genomic_DNA"/>
</dbReference>
<dbReference type="EMBL" id="CP002688">
    <property type="protein sequence ID" value="AED92115.1"/>
    <property type="molecule type" value="Genomic_DNA"/>
</dbReference>
<dbReference type="EMBL" id="CP002688">
    <property type="protein sequence ID" value="AED92116.1"/>
    <property type="molecule type" value="Genomic_DNA"/>
</dbReference>
<dbReference type="EMBL" id="AY063891">
    <property type="protein sequence ID" value="AAL36247.1"/>
    <property type="molecule type" value="mRNA"/>
</dbReference>
<dbReference type="EMBL" id="AY122918">
    <property type="protein sequence ID" value="AAM67451.1"/>
    <property type="molecule type" value="mRNA"/>
</dbReference>
<dbReference type="EMBL" id="AY085248">
    <property type="protein sequence ID" value="AAM62480.1"/>
    <property type="molecule type" value="mRNA"/>
</dbReference>
<dbReference type="PIR" id="T51454">
    <property type="entry name" value="T51454"/>
</dbReference>
<dbReference type="RefSeq" id="NP_001190314.1">
    <property type="nucleotide sequence ID" value="NM_001203385.1"/>
</dbReference>
<dbReference type="RefSeq" id="NP_197013.1">
    <property type="nucleotide sequence ID" value="NM_121513.5"/>
</dbReference>
<dbReference type="SMR" id="Q9SMX3"/>
<dbReference type="BioGRID" id="16638">
    <property type="interactions" value="16"/>
</dbReference>
<dbReference type="FunCoup" id="Q9SMX3">
    <property type="interactions" value="2873"/>
</dbReference>
<dbReference type="IntAct" id="Q9SMX3">
    <property type="interactions" value="2"/>
</dbReference>
<dbReference type="MINT" id="Q9SMX3"/>
<dbReference type="STRING" id="3702.Q9SMX3"/>
<dbReference type="TCDB" id="1.B.8.1.19">
    <property type="family name" value="the mitochondrial and plastid porin (mpp) family"/>
</dbReference>
<dbReference type="iPTMnet" id="Q9SMX3"/>
<dbReference type="PaxDb" id="3702-AT5G15090.2"/>
<dbReference type="ProteomicsDB" id="228582"/>
<dbReference type="EnsemblPlants" id="AT5G15090.1">
    <property type="protein sequence ID" value="AT5G15090.1"/>
    <property type="gene ID" value="AT5G15090"/>
</dbReference>
<dbReference type="EnsemblPlants" id="AT5G15090.2">
    <property type="protein sequence ID" value="AT5G15090.2"/>
    <property type="gene ID" value="AT5G15090"/>
</dbReference>
<dbReference type="GeneID" id="831361"/>
<dbReference type="Gramene" id="AT5G15090.1">
    <property type="protein sequence ID" value="AT5G15090.1"/>
    <property type="gene ID" value="AT5G15090"/>
</dbReference>
<dbReference type="Gramene" id="AT5G15090.2">
    <property type="protein sequence ID" value="AT5G15090.2"/>
    <property type="gene ID" value="AT5G15090"/>
</dbReference>
<dbReference type="KEGG" id="ath:AT5G15090"/>
<dbReference type="Araport" id="AT5G15090"/>
<dbReference type="TAIR" id="AT5G15090">
    <property type="gene designation" value="VDAC3"/>
</dbReference>
<dbReference type="eggNOG" id="KOG3126">
    <property type="taxonomic scope" value="Eukaryota"/>
</dbReference>
<dbReference type="HOGENOM" id="CLU_069937_0_0_1"/>
<dbReference type="InParanoid" id="Q9SMX3"/>
<dbReference type="OMA" id="LPDHKSG"/>
<dbReference type="PhylomeDB" id="Q9SMX3"/>
<dbReference type="CD-CODE" id="4299E36E">
    <property type="entry name" value="Nucleolus"/>
</dbReference>
<dbReference type="PRO" id="PR:Q9SMX3"/>
<dbReference type="Proteomes" id="UP000006548">
    <property type="component" value="Chromosome 5"/>
</dbReference>
<dbReference type="ExpressionAtlas" id="Q9SMX3">
    <property type="expression patterns" value="baseline and differential"/>
</dbReference>
<dbReference type="GO" id="GO:0009507">
    <property type="term" value="C:chloroplast"/>
    <property type="evidence" value="ECO:0007005"/>
    <property type="project" value="TAIR"/>
</dbReference>
<dbReference type="GO" id="GO:0009941">
    <property type="term" value="C:chloroplast envelope"/>
    <property type="evidence" value="ECO:0007005"/>
    <property type="project" value="TAIR"/>
</dbReference>
<dbReference type="GO" id="GO:0005741">
    <property type="term" value="C:mitochondrial outer membrane"/>
    <property type="evidence" value="ECO:0007669"/>
    <property type="project" value="UniProtKB-SubCell"/>
</dbReference>
<dbReference type="GO" id="GO:0005739">
    <property type="term" value="C:mitochondrion"/>
    <property type="evidence" value="ECO:0000314"/>
    <property type="project" value="TAIR"/>
</dbReference>
<dbReference type="GO" id="GO:0005730">
    <property type="term" value="C:nucleolus"/>
    <property type="evidence" value="ECO:0007005"/>
    <property type="project" value="TAIR"/>
</dbReference>
<dbReference type="GO" id="GO:0009505">
    <property type="term" value="C:plant-type cell wall"/>
    <property type="evidence" value="ECO:0007005"/>
    <property type="project" value="TAIR"/>
</dbReference>
<dbReference type="GO" id="GO:0000325">
    <property type="term" value="C:plant-type vacuole"/>
    <property type="evidence" value="ECO:0007005"/>
    <property type="project" value="TAIR"/>
</dbReference>
<dbReference type="GO" id="GO:0005886">
    <property type="term" value="C:plasma membrane"/>
    <property type="evidence" value="ECO:0007005"/>
    <property type="project" value="TAIR"/>
</dbReference>
<dbReference type="GO" id="GO:0009536">
    <property type="term" value="C:plastid"/>
    <property type="evidence" value="ECO:0007005"/>
    <property type="project" value="TAIR"/>
</dbReference>
<dbReference type="GO" id="GO:0046930">
    <property type="term" value="C:pore complex"/>
    <property type="evidence" value="ECO:0007669"/>
    <property type="project" value="UniProtKB-KW"/>
</dbReference>
<dbReference type="GO" id="GO:0005773">
    <property type="term" value="C:vacuole"/>
    <property type="evidence" value="ECO:0007005"/>
    <property type="project" value="TAIR"/>
</dbReference>
<dbReference type="GO" id="GO:0015288">
    <property type="term" value="F:porin activity"/>
    <property type="evidence" value="ECO:0007669"/>
    <property type="project" value="UniProtKB-KW"/>
</dbReference>
<dbReference type="GO" id="GO:0008308">
    <property type="term" value="F:voltage-gated monoatomic anion channel activity"/>
    <property type="evidence" value="ECO:0000314"/>
    <property type="project" value="TAIR"/>
</dbReference>
<dbReference type="GO" id="GO:0009060">
    <property type="term" value="P:aerobic respiration"/>
    <property type="evidence" value="ECO:0000315"/>
    <property type="project" value="TAIR"/>
</dbReference>
<dbReference type="GO" id="GO:0009626">
    <property type="term" value="P:plant-type hypersensitive response"/>
    <property type="evidence" value="ECO:0007669"/>
    <property type="project" value="UniProtKB-KW"/>
</dbReference>
<dbReference type="GO" id="GO:0010029">
    <property type="term" value="P:regulation of seed germination"/>
    <property type="evidence" value="ECO:0000315"/>
    <property type="project" value="TAIR"/>
</dbReference>
<dbReference type="GO" id="GO:0009617">
    <property type="term" value="P:response to bacterium"/>
    <property type="evidence" value="ECO:0000270"/>
    <property type="project" value="TAIR"/>
</dbReference>
<dbReference type="GO" id="GO:0009409">
    <property type="term" value="P:response to cold"/>
    <property type="evidence" value="ECO:0000315"/>
    <property type="project" value="TAIR"/>
</dbReference>
<dbReference type="CDD" id="cd07306">
    <property type="entry name" value="Porin3_VDAC"/>
    <property type="match status" value="1"/>
</dbReference>
<dbReference type="FunFam" id="2.40.160.10:FF:000003">
    <property type="entry name" value="Outer mitochondrial membrane protein porin"/>
    <property type="match status" value="1"/>
</dbReference>
<dbReference type="Gene3D" id="2.40.160.10">
    <property type="entry name" value="Porin"/>
    <property type="match status" value="1"/>
</dbReference>
<dbReference type="InterPro" id="IPR023614">
    <property type="entry name" value="Porin_dom_sf"/>
</dbReference>
<dbReference type="InterPro" id="IPR001925">
    <property type="entry name" value="Porin_Euk"/>
</dbReference>
<dbReference type="InterPro" id="IPR027246">
    <property type="entry name" value="Porin_Euk/Tom40"/>
</dbReference>
<dbReference type="PANTHER" id="PTHR11743:SF50">
    <property type="entry name" value="MITOCHONDRIAL OUTER MEMBRANE PROTEIN PORIN 3"/>
    <property type="match status" value="1"/>
</dbReference>
<dbReference type="PANTHER" id="PTHR11743">
    <property type="entry name" value="VOLTAGE-DEPENDENT ANION-SELECTIVE CHANNEL"/>
    <property type="match status" value="1"/>
</dbReference>
<dbReference type="Pfam" id="PF01459">
    <property type="entry name" value="Porin_3"/>
    <property type="match status" value="1"/>
</dbReference>
<dbReference type="PROSITE" id="PS00558">
    <property type="entry name" value="EUKARYOTIC_PORIN"/>
    <property type="match status" value="1"/>
</dbReference>
<organism evidence="11">
    <name type="scientific">Arabidopsis thaliana</name>
    <name type="common">Mouse-ear cress</name>
    <dbReference type="NCBI Taxonomy" id="3702"/>
    <lineage>
        <taxon>Eukaryota</taxon>
        <taxon>Viridiplantae</taxon>
        <taxon>Streptophyta</taxon>
        <taxon>Embryophyta</taxon>
        <taxon>Tracheophyta</taxon>
        <taxon>Spermatophyta</taxon>
        <taxon>Magnoliopsida</taxon>
        <taxon>eudicotyledons</taxon>
        <taxon>Gunneridae</taxon>
        <taxon>Pentapetalae</taxon>
        <taxon>rosids</taxon>
        <taxon>malvids</taxon>
        <taxon>Brassicales</taxon>
        <taxon>Brassicaceae</taxon>
        <taxon>Camelineae</taxon>
        <taxon>Arabidopsis</taxon>
    </lineage>
</organism>
<name>VDAC3_ARATH</name>
<accession>Q9SMX3</accession>
<accession>Q8L815</accession>
<accession>Q8LET4</accession>
<proteinExistence type="evidence at protein level"/>